<comment type="function">
    <text evidence="1">Chaperone required for the export of the chitin synthase CHS3 from the endoplasmic reticulum.</text>
</comment>
<comment type="subunit">
    <text evidence="1">Interacts with CHS3.</text>
</comment>
<comment type="subcellular location">
    <subcellularLocation>
        <location evidence="1">Endoplasmic reticulum membrane</location>
        <topology evidence="1">Multi-pass membrane protein</topology>
    </subcellularLocation>
</comment>
<comment type="similarity">
    <text evidence="3">Belongs to the CHS7 family.</text>
</comment>
<keyword id="KW-0961">Cell wall biogenesis/degradation</keyword>
<keyword id="KW-0256">Endoplasmic reticulum</keyword>
<keyword id="KW-0472">Membrane</keyword>
<keyword id="KW-0653">Protein transport</keyword>
<keyword id="KW-1185">Reference proteome</keyword>
<keyword id="KW-0812">Transmembrane</keyword>
<keyword id="KW-1133">Transmembrane helix</keyword>
<keyword id="KW-0813">Transport</keyword>
<feature type="chain" id="PRO_0000280567" description="Chitin synthase export chaperone">
    <location>
        <begin position="1"/>
        <end position="339"/>
    </location>
</feature>
<feature type="transmembrane region" description="Helical" evidence="2">
    <location>
        <begin position="84"/>
        <end position="104"/>
    </location>
</feature>
<feature type="transmembrane region" description="Helical" evidence="2">
    <location>
        <begin position="121"/>
        <end position="141"/>
    </location>
</feature>
<feature type="transmembrane region" description="Helical" evidence="2">
    <location>
        <begin position="155"/>
        <end position="175"/>
    </location>
</feature>
<feature type="transmembrane region" description="Helical" evidence="2">
    <location>
        <begin position="192"/>
        <end position="212"/>
    </location>
</feature>
<feature type="transmembrane region" description="Helical" evidence="2">
    <location>
        <begin position="223"/>
        <end position="243"/>
    </location>
</feature>
<feature type="transmembrane region" description="Helical" evidence="2">
    <location>
        <begin position="249"/>
        <end position="269"/>
    </location>
</feature>
<feature type="transmembrane region" description="Helical" evidence="2">
    <location>
        <begin position="288"/>
        <end position="308"/>
    </location>
</feature>
<feature type="sequence conflict" description="In Ref. 3; AAF34904." evidence="3" ref="3">
    <original>L</original>
    <variation>F</variation>
    <location>
        <position position="237"/>
    </location>
</feature>
<proteinExistence type="inferred from homology"/>
<gene>
    <name type="primary">CHS7</name>
    <name type="ordered locus">AFR033C</name>
</gene>
<reference key="1">
    <citation type="journal article" date="2004" name="Science">
        <title>The Ashbya gossypii genome as a tool for mapping the ancient Saccharomyces cerevisiae genome.</title>
        <authorList>
            <person name="Dietrich F.S."/>
            <person name="Voegeli S."/>
            <person name="Brachat S."/>
            <person name="Lerch A."/>
            <person name="Gates K."/>
            <person name="Steiner S."/>
            <person name="Mohr C."/>
            <person name="Poehlmann R."/>
            <person name="Luedi P."/>
            <person name="Choi S."/>
            <person name="Wing R.A."/>
            <person name="Flavier A."/>
            <person name="Gaffney T.D."/>
            <person name="Philippsen P."/>
        </authorList>
    </citation>
    <scope>NUCLEOTIDE SEQUENCE [LARGE SCALE GENOMIC DNA]</scope>
    <source>
        <strain>ATCC 10895 / CBS 109.51 / FGSC 9923 / NRRL Y-1056</strain>
    </source>
</reference>
<reference key="2">
    <citation type="journal article" date="2013" name="G3 (Bethesda)">
        <title>Genomes of Ashbya fungi isolated from insects reveal four mating-type loci, numerous translocations, lack of transposons, and distinct gene duplications.</title>
        <authorList>
            <person name="Dietrich F.S."/>
            <person name="Voegeli S."/>
            <person name="Kuo S."/>
            <person name="Philippsen P."/>
        </authorList>
    </citation>
    <scope>GENOME REANNOTATION</scope>
    <source>
        <strain>ATCC 10895 / CBS 109.51 / FGSC 9923 / NRRL Y-1056</strain>
    </source>
</reference>
<reference key="3">
    <citation type="journal article" date="2000" name="Gene">
        <title>PCR-based gene targeting in the filamentous fungus Ashbya gossypii.</title>
        <authorList>
            <person name="Wendland J."/>
            <person name="Ayad-Durieux Y."/>
            <person name="Knechtle P."/>
            <person name="Rebischung C."/>
            <person name="Philippsen P."/>
        </authorList>
    </citation>
    <scope>NUCLEOTIDE SEQUENCE [GENOMIC DNA] OF 225-339</scope>
</reference>
<accession>Q754N9</accession>
<accession>Q9P8V1</accession>
<name>CHS7_EREGS</name>
<sequence>MSSKEAPMRAWLKMAGLAMSNKSWLSLGDFAGICAKTPLPMCFVVQTSSLPGGSVGATHYDRTHMNIGMVPRCYSRTVDIANTAIFQLGNAFVNILALCVILIISYNIRFKYTAIGRSEYGYFFQLCFMLICMTLVVDCGVSPPGTLAYPYLAALQIGLAGACSWALAVMGFLGFRLWEDGTRKSMLIVRGVSMVGFLLGSLVSAITFTNWIQHHPDMKTNTTALFVVMYGLNGLALLMYSVCQLVVSIFVLSNFWMTGSTILGVIFITTGQVLMYTISYEICEGVKHYLDGLFIGSICNVFALMMIYKTWDISTDEDLEFSVSISVDGDIMYNSNLKL</sequence>
<dbReference type="EMBL" id="AE016819">
    <property type="protein sequence ID" value="AAS53404.1"/>
    <property type="molecule type" value="Genomic_DNA"/>
</dbReference>
<dbReference type="EMBL" id="AF195003">
    <property type="protein sequence ID" value="AAF34904.1"/>
    <property type="molecule type" value="Genomic_DNA"/>
</dbReference>
<dbReference type="RefSeq" id="NP_985580.1">
    <property type="nucleotide sequence ID" value="NM_210934.1"/>
</dbReference>
<dbReference type="FunCoup" id="Q754N9">
    <property type="interactions" value="76"/>
</dbReference>
<dbReference type="STRING" id="284811.Q754N9"/>
<dbReference type="EnsemblFungi" id="AAS53404">
    <property type="protein sequence ID" value="AAS53404"/>
    <property type="gene ID" value="AGOS_AFR033C"/>
</dbReference>
<dbReference type="GeneID" id="4621820"/>
<dbReference type="KEGG" id="ago:AGOS_AFR033C"/>
<dbReference type="eggNOG" id="ENOG502QRVH">
    <property type="taxonomic scope" value="Eukaryota"/>
</dbReference>
<dbReference type="HOGENOM" id="CLU_050424_0_1_1"/>
<dbReference type="InParanoid" id="Q754N9"/>
<dbReference type="OMA" id="TVWEVKD"/>
<dbReference type="OrthoDB" id="2189463at2759"/>
<dbReference type="Proteomes" id="UP000000591">
    <property type="component" value="Chromosome VI"/>
</dbReference>
<dbReference type="GO" id="GO:0005935">
    <property type="term" value="C:cellular bud neck"/>
    <property type="evidence" value="ECO:0007669"/>
    <property type="project" value="EnsemblFungi"/>
</dbReference>
<dbReference type="GO" id="GO:0005789">
    <property type="term" value="C:endoplasmic reticulum membrane"/>
    <property type="evidence" value="ECO:0000318"/>
    <property type="project" value="GO_Central"/>
</dbReference>
<dbReference type="GO" id="GO:0051082">
    <property type="term" value="F:unfolded protein binding"/>
    <property type="evidence" value="ECO:0000318"/>
    <property type="project" value="GO_Central"/>
</dbReference>
<dbReference type="GO" id="GO:0071555">
    <property type="term" value="P:cell wall organization"/>
    <property type="evidence" value="ECO:0007669"/>
    <property type="project" value="UniProtKB-KW"/>
</dbReference>
<dbReference type="GO" id="GO:0006031">
    <property type="term" value="P:chitin biosynthetic process"/>
    <property type="evidence" value="ECO:0000318"/>
    <property type="project" value="GO_Central"/>
</dbReference>
<dbReference type="GO" id="GO:0006888">
    <property type="term" value="P:endoplasmic reticulum to Golgi vesicle-mediated transport"/>
    <property type="evidence" value="ECO:0007669"/>
    <property type="project" value="EnsemblFungi"/>
</dbReference>
<dbReference type="GO" id="GO:0006457">
    <property type="term" value="P:protein folding"/>
    <property type="evidence" value="ECO:0000318"/>
    <property type="project" value="GO_Central"/>
</dbReference>
<dbReference type="GO" id="GO:0015031">
    <property type="term" value="P:protein transport"/>
    <property type="evidence" value="ECO:0007669"/>
    <property type="project" value="UniProtKB-KW"/>
</dbReference>
<dbReference type="InterPro" id="IPR022057">
    <property type="entry name" value="Chs7"/>
</dbReference>
<dbReference type="PANTHER" id="PTHR35329">
    <property type="entry name" value="CHITIN SYNTHASE EXPORT CHAPERONE"/>
    <property type="match status" value="1"/>
</dbReference>
<dbReference type="PANTHER" id="PTHR35329:SF2">
    <property type="entry name" value="CHITIN SYNTHASE EXPORT CHAPERONE"/>
    <property type="match status" value="1"/>
</dbReference>
<dbReference type="Pfam" id="PF12271">
    <property type="entry name" value="Chs7"/>
    <property type="match status" value="1"/>
</dbReference>
<protein>
    <recommendedName>
        <fullName>Chitin synthase export chaperone</fullName>
    </recommendedName>
</protein>
<evidence type="ECO:0000250" key="1"/>
<evidence type="ECO:0000255" key="2"/>
<evidence type="ECO:0000305" key="3"/>
<organism>
    <name type="scientific">Eremothecium gossypii (strain ATCC 10895 / CBS 109.51 / FGSC 9923 / NRRL Y-1056)</name>
    <name type="common">Yeast</name>
    <name type="synonym">Ashbya gossypii</name>
    <dbReference type="NCBI Taxonomy" id="284811"/>
    <lineage>
        <taxon>Eukaryota</taxon>
        <taxon>Fungi</taxon>
        <taxon>Dikarya</taxon>
        <taxon>Ascomycota</taxon>
        <taxon>Saccharomycotina</taxon>
        <taxon>Saccharomycetes</taxon>
        <taxon>Saccharomycetales</taxon>
        <taxon>Saccharomycetaceae</taxon>
        <taxon>Eremothecium</taxon>
    </lineage>
</organism>